<dbReference type="EMBL" id="AF389464">
    <property type="protein sequence ID" value="AAK73522.1"/>
    <property type="molecule type" value="Genomic_RNA"/>
</dbReference>
<dbReference type="RefSeq" id="NP_149148.1">
    <property type="nucleotide sequence ID" value="NC_003018.1"/>
</dbReference>
<dbReference type="SMR" id="Q91ID9"/>
<dbReference type="KEGG" id="vg:2598190"/>
<dbReference type="Proteomes" id="UP000006712">
    <property type="component" value="Genome"/>
</dbReference>
<dbReference type="GO" id="GO:0019028">
    <property type="term" value="C:viral capsid"/>
    <property type="evidence" value="ECO:0007669"/>
    <property type="project" value="UniProtKB-KW"/>
</dbReference>
<dbReference type="GO" id="GO:0008233">
    <property type="term" value="F:peptidase activity"/>
    <property type="evidence" value="ECO:0007669"/>
    <property type="project" value="InterPro"/>
</dbReference>
<dbReference type="InterPro" id="IPR008580">
    <property type="entry name" value="PPPDE_dom"/>
</dbReference>
<dbReference type="PROSITE" id="PS51858">
    <property type="entry name" value="PPPDE"/>
    <property type="match status" value="1"/>
</dbReference>
<feature type="chain" id="PRO_0000403206" description="Putative structural protein VP3">
    <location>
        <begin position="1"/>
        <end position="1237"/>
    </location>
</feature>
<feature type="domain" description="PPPDE" evidence="1">
    <location>
        <begin position="963"/>
        <end position="1178"/>
    </location>
</feature>
<feature type="active site" evidence="1">
    <location>
        <position position="1001"/>
    </location>
</feature>
<feature type="active site" evidence="1">
    <location>
        <position position="1149"/>
    </location>
</feature>
<organism>
    <name type="scientific">Lymantria dispar cypovirus 1 (isolate Rao)</name>
    <name type="common">LdCPV-1</name>
    <dbReference type="NCBI Taxonomy" id="648169"/>
    <lineage>
        <taxon>Viruses</taxon>
        <taxon>Riboviria</taxon>
        <taxon>Orthornavirae</taxon>
        <taxon>Duplornaviricota</taxon>
        <taxon>Resentoviricetes</taxon>
        <taxon>Reovirales</taxon>
        <taxon>Spinareoviridae</taxon>
        <taxon>Cypovirus</taxon>
        <taxon>Cypovirus 1</taxon>
    </lineage>
</organism>
<gene>
    <name type="primary">S3</name>
</gene>
<sequence>MEINRAEIRREITRYAGLIEQQTQINITDNDQDILKTLIADYNLRMRRDALLGELARLDELRDISQIKGDEYKLTIPLLPIISTLNQHEFEIIQANIETDFIADNVTFITSFIPADLDLEQTIQHVFFRTTATTPYFRSFNLVIAILDYDEDKGDVKLDVKITITRSNNGVFNYNYTWAGKDYERVSICYNLISYLQQINGPRGRDDEAEMPIYEIVRQNNGSQPSYASGEHLYIVSSHLHVDEIVRDREHRDISVDVTELNLMFPIVRMFDPVDLRDIRIEDVTPGIEFTINMEVSTYLTELSGSHVDTQRTIMNHAEKIVGNYTGQQWNVQSNMLSEVRTQKLEEEDEEARQRGDYTTSTLVQTMAQVSDLFSSTILYRYAEAELDNTVGAFELLRPVMSIPTEYIHDGRIGPITNISASASIVTSSNNGVGEVRNIFKPIGDQTINEAHFANVYSNDEYAIYLRFSYRQAPVQSETVYLQQALPSMRIVSPSSVSTTVSTALIGGNTIRINCPIRPHREDNFVAGGVQIPRQSTAVEIHVQEILIGYRQATTFPIDTEGRLSLELMYGLESRSAVGNTMSPVRFVTVNDGEFFGLTCPIDLTLSTIVDPASYLSDGVILVTTAFEDLRGYAWLATLGGDWPRTYNSSMGAFNIFTGGDINLSTEYGSEMTYTFKVELPINYMFNNMTISSHNVPRVPVLGVTYASIYQDSRTDLEARRFLQTLVFRIHGSWSARVPYPPGNLPTRNTANQHQDIQQVINDSIFQELDRLSDELLDLENRLDHLERQFEMFIQSQESEWWEILLNVVIDISIGYFSTFAGDALKNAQRAITKAVGYTRRVLMTVTKTMRNGTIFTRLLGAKNLSGQALASLETLVESALRSINMKKSRFMRGAEPLYKTNKVAQHIDNTEKMNMMMDFSFANRNNRQNITADTLSKMHTQNAHGTSDTILPAMRVYYRPLGFLDKRVGDALHTGITRPEALKKQLRSDVANVGTRAPSHAFMTYTDVLYEDAGSYIVSKRYLGIGELNKFGRTTSDKNAGIGGVNIKYRVNKITADGKYIIDRLDYTESGYTALDVDRLYSSLFGKQGDGLSTEQKWMDISKGVDAKIISADMVSEEFLSSKYTGQMIDELINSPPQFNYSLVYRNCQDFALDVLRVAQGFSPSNKWDVSTAARMQQRRVISLMDDLMGESETFARSGRASQLLLRQVRESYVKARKRGDLQAVKALQLRFKGFF</sequence>
<evidence type="ECO:0000255" key="1">
    <source>
        <dbReference type="PROSITE-ProRule" id="PRU01205"/>
    </source>
</evidence>
<evidence type="ECO:0000305" key="2"/>
<accession>Q91ID9</accession>
<keyword id="KW-0167">Capsid protein</keyword>
<keyword id="KW-1185">Reference proteome</keyword>
<keyword id="KW-0946">Virion</keyword>
<organismHost>
    <name type="scientific">Lymantria dispar</name>
    <name type="common">Gypsy moth</name>
    <name type="synonym">Porthetria dispar</name>
    <dbReference type="NCBI Taxonomy" id="13123"/>
</organismHost>
<comment type="subcellular location">
    <subcellularLocation>
        <location evidence="2">Virion</location>
    </subcellularLocation>
</comment>
<protein>
    <recommendedName>
        <fullName>Putative structural protein VP3</fullName>
    </recommendedName>
</protein>
<reference key="1">
    <citation type="submission" date="2001-06" db="EMBL/GenBank/DDBJ databases">
        <title>Identification of dsRNA electrophoretypes of two cypoviruses from a dual infection in gypsy moth, Lymantria dispar.</title>
        <authorList>
            <person name="Rao S."/>
            <person name="Shapiro M."/>
            <person name="Lynn D."/>
            <person name="Hagiwara K."/>
            <person name="Blackmon B."/>
            <person name="Fang G."/>
            <person name="Carner G.R."/>
        </authorList>
    </citation>
    <scope>NUCLEOTIDE SEQUENCE [GENOMIC RNA]</scope>
</reference>
<name>VP3_LDCPR</name>
<proteinExistence type="predicted"/>